<accession>Q50864</accession>
<organism>
    <name type="scientific">Myxococcus xanthus</name>
    <dbReference type="NCBI Taxonomy" id="34"/>
    <lineage>
        <taxon>Bacteria</taxon>
        <taxon>Pseudomonadati</taxon>
        <taxon>Myxococcota</taxon>
        <taxon>Myxococcia</taxon>
        <taxon>Myxococcales</taxon>
        <taxon>Cystobacterineae</taxon>
        <taxon>Myxococcaceae</taxon>
        <taxon>Myxococcus</taxon>
    </lineage>
</organism>
<sequence length="1275" mass="139597">MWQKWADVTQGHVAAPGPGDFAQMVAVLRKVLEERQPCAPEQCDERSALEGALRLATEHLHRALPDGGQGMSSLQEAARLADPAAFSIPASHRARGGTLVTSAKRAFVNGLEPFHVEMLRPQGNFNRALVRVLEYLTVHRALGLRDDVSSWAVAQLEPLAVPTRWVVGSHRGRVAGALVGFAKRGYLYTLGPVLEAVLQGQARWNLAMVEAIRAAAGAQAPGEAEARRHVADVEALREPLAGRTLPGALRVTQPLWGEVLRRQSRFNAESVLALANLLGTRTAPPQPPSLADYPAWCAAREPARVTAAQEAVARLSRRPLISLVTPVHDASEAFLRECLASVSSQVYADWEWLLVDDASTAPHLARILREAAERESRIRVLTASSEGDTARATNEGFAACRGDFVGFLGAEDTLSPHALAEVALAFLAQPELALLYTDEDGLDAQGHRSAPFFKPDWSPDLLRSVDYVRHFLVVRRETLAQVGGLREGFDGAQGHDLMLRLSEATSSIGHITEPLYHAREGSAASASRGAGLDTATKAGVRALSEHLARQGESAEVTSPAPIQYRVRYPVRGTPKVSIIVPFKDRPDLLRTLVDSLLAQTRYPHFEVLLVSNNSTRPETFALLEQWVDPRLVKLTWDHPFNYPAINNWAAKQASGELLLFLNNDMEVVDPSWLDELVSQAQRPEVGAVGCKLLFPEGTVQHAGVVVGMTGFAGHPFWRLPEGPISTPFGHTEWTRNWLSVTSACVILRREVFESLGGFDERFQVCGSDVELGLRLNAQGLRVVCTAQTRLIHHESASRRADAIPEADYWLSYAAYRPWLGPKGDPYYNPHLTLTATDCGLRRHPEDGEQLAVRTLGRDVPSARDVRGEQRARAQRHLIEHLEAWDFTPEQAQTSRESAPAALAALRAKGRVETATWFVPAFGHVYAGIHTIFRFADLMQRRHGVRSDFVIYDQPNVRPGDIEARVAAICPGAVGAVRVLRRPEDVALLPACDLALATAWTSAYRVLHHPRAGLRGYFVQDYEPLFHAAGTPSALAEQTYGLGFYGIFNTPGLYEHVVGLHGMEGAWFEPAVDGTLFHPRRPPRQGPVRVFFYGRPGNERNGFELGLAALAQLKRELGPAVEVLAAGAEWDPEAYGVRGLVTNLGMLPAERTGALYRECDVGLCFMFTRHPSYLPLEMMACGVTVVTNDNPTNRWLLTHGENCLLAEPTPSGVLARLRDAVSNGALRARLGTNAAERVSRTSWEAEVDRVMKGLLNTGAHPAATLDDRASSLEHAS</sequence>
<name>RFBC_MYXXA</name>
<dbReference type="EMBL" id="U36795">
    <property type="protein sequence ID" value="AAB05019.1"/>
    <property type="molecule type" value="Genomic_DNA"/>
</dbReference>
<dbReference type="PIR" id="T18556">
    <property type="entry name" value="T18556"/>
</dbReference>
<dbReference type="RefSeq" id="WP_011554616.1">
    <property type="nucleotide sequence ID" value="NZ_JABFNQ010000011.1"/>
</dbReference>
<dbReference type="SMR" id="Q50864"/>
<dbReference type="CAZy" id="GT2">
    <property type="family name" value="Glycosyltransferase Family 2"/>
</dbReference>
<dbReference type="CAZy" id="GT4">
    <property type="family name" value="Glycosyltransferase Family 4"/>
</dbReference>
<dbReference type="TCDB" id="4.D.1.3.4">
    <property type="family name" value="the putative vectorial glycosyl polymerization (vgp) family"/>
</dbReference>
<dbReference type="GeneID" id="41361921"/>
<dbReference type="OMA" id="YLPLEMM"/>
<dbReference type="GO" id="GO:0009103">
    <property type="term" value="P:lipopolysaccharide biosynthetic process"/>
    <property type="evidence" value="ECO:0007669"/>
    <property type="project" value="UniProtKB-KW"/>
</dbReference>
<dbReference type="CDD" id="cd04184">
    <property type="entry name" value="GT2_RfbC_Mx_like"/>
    <property type="match status" value="1"/>
</dbReference>
<dbReference type="CDD" id="cd03801">
    <property type="entry name" value="GT4_PimA-like"/>
    <property type="match status" value="1"/>
</dbReference>
<dbReference type="CDD" id="cd04186">
    <property type="entry name" value="GT_2_like_c"/>
    <property type="match status" value="1"/>
</dbReference>
<dbReference type="Gene3D" id="3.40.50.11090">
    <property type="match status" value="1"/>
</dbReference>
<dbReference type="Gene3D" id="3.40.50.2000">
    <property type="entry name" value="Glycogen Phosphorylase B"/>
    <property type="match status" value="1"/>
</dbReference>
<dbReference type="Gene3D" id="3.90.550.10">
    <property type="entry name" value="Spore Coat Polysaccharide Biosynthesis Protein SpsA, Chain A"/>
    <property type="match status" value="2"/>
</dbReference>
<dbReference type="InterPro" id="IPR001173">
    <property type="entry name" value="Glyco_trans_2-like"/>
</dbReference>
<dbReference type="InterPro" id="IPR050834">
    <property type="entry name" value="Glycosyltransf_2"/>
</dbReference>
<dbReference type="InterPro" id="IPR029044">
    <property type="entry name" value="Nucleotide-diphossugar_trans"/>
</dbReference>
<dbReference type="InterPro" id="IPR055050">
    <property type="entry name" value="WsaF_C"/>
</dbReference>
<dbReference type="PANTHER" id="PTHR43685">
    <property type="entry name" value="GLYCOSYLTRANSFERASE"/>
    <property type="match status" value="1"/>
</dbReference>
<dbReference type="PANTHER" id="PTHR43685:SF2">
    <property type="entry name" value="GLYCOSYLTRANSFERASE 2-LIKE DOMAIN-CONTAINING PROTEIN"/>
    <property type="match status" value="1"/>
</dbReference>
<dbReference type="Pfam" id="PF00535">
    <property type="entry name" value="Glycos_transf_2"/>
    <property type="match status" value="2"/>
</dbReference>
<dbReference type="Pfam" id="PF22772">
    <property type="entry name" value="WsaF_C"/>
    <property type="match status" value="1"/>
</dbReference>
<dbReference type="SUPFAM" id="SSF53448">
    <property type="entry name" value="Nucleotide-diphospho-sugar transferases"/>
    <property type="match status" value="2"/>
</dbReference>
<dbReference type="SUPFAM" id="SSF53756">
    <property type="entry name" value="UDP-Glycosyltransferase/glycogen phosphorylase"/>
    <property type="match status" value="1"/>
</dbReference>
<feature type="chain" id="PRO_0000097292" description="O-antigen biosynthesis protein RfbC">
    <location>
        <begin position="1"/>
        <end position="1275"/>
    </location>
</feature>
<proteinExistence type="predicted"/>
<reference key="1">
    <citation type="journal article" date="1996" name="J. Bacteriol.">
        <title>The Myxococcus xanthus rfbABC operon encodes an ATP-binding cassette transporter homolog required for O-antigen biosynthesis and multicellular development.</title>
        <authorList>
            <person name="Guo D."/>
            <person name="Bowden M.G."/>
            <person name="Pershad R."/>
            <person name="Kaplan H.B."/>
        </authorList>
    </citation>
    <scope>NUCLEOTIDE SEQUENCE [GENOMIC DNA]</scope>
    <source>
        <strain>DK6640</strain>
    </source>
</reference>
<keyword id="KW-0448">Lipopolysaccharide biosynthesis</keyword>
<protein>
    <recommendedName>
        <fullName>O-antigen biosynthesis protein RfbC</fullName>
    </recommendedName>
</protein>
<comment type="function">
    <text>Involved in O-antigen biosynthesis.</text>
</comment>
<gene>
    <name type="primary">rfbC</name>
</gene>